<sequence>MGEQLDPFSASNLPDFISSQKIGRPVNFEGQTNRGHPFSGLKKRGQSSRSWVKIDQDGNSAVLELDKATIMKRCSLPSRDLRLLDPLFIYPSSILGRERAIVVSLEKIRCIITAEEVILMNARDASVVQYQSELCKRLQSNHNLNVKDDLPFEFKALELVLELSCLSLDAQVNELEMEVYPVLDELATNISTLNLEHVRRLKGRLLTLTQKVQKVCDEIEHLMDDDDDMAEMYLTEKKERAEAHASEELEDNIGEDFESSGIVSKSAPVSPVGSTSGNFGKLQRAFSSIVGSHKSLLSSSSIGENIDQLEMLLEAYFVVVDNTLSKLSSLKEYIDDTEDLINIKLGNVQNQLIQFQLLLTAATFVAAIFAAVTAVFGMNLQDSVFQNPTTFQYVLLITGIGCGFLYFGFVLYFKHKKVFPL</sequence>
<evidence type="ECO:0000250" key="1"/>
<evidence type="ECO:0000255" key="2"/>
<evidence type="ECO:0000269" key="3">
    <source>
    </source>
</evidence>
<evidence type="ECO:0000269" key="4">
    <source>
    </source>
</evidence>
<evidence type="ECO:0000305" key="5"/>
<gene>
    <name type="primary">MRS2-5</name>
    <name type="synonym">MGT3</name>
    <name type="ordered locus">At2g03620</name>
    <name type="ORF">F19B11.7</name>
</gene>
<reference key="1">
    <citation type="journal article" date="2001" name="Plant Cell">
        <title>A novel family of magnesium transport genes in Arabidopsis.</title>
        <authorList>
            <person name="Li L."/>
            <person name="Tutone A.F."/>
            <person name="Drummond R.S."/>
            <person name="Gardner R.C."/>
            <person name="Luan S."/>
        </authorList>
    </citation>
    <scope>NUCLEOTIDE SEQUENCE [MRNA]</scope>
    <scope>GENE FAMILY</scope>
    <scope>TISSUE SPECIFICITY</scope>
    <source>
        <strain>cv. Landsberg erecta</strain>
    </source>
</reference>
<reference key="2">
    <citation type="journal article" date="1999" name="Nature">
        <title>Sequence and analysis of chromosome 2 of the plant Arabidopsis thaliana.</title>
        <authorList>
            <person name="Lin X."/>
            <person name="Kaul S."/>
            <person name="Rounsley S.D."/>
            <person name="Shea T.P."/>
            <person name="Benito M.-I."/>
            <person name="Town C.D."/>
            <person name="Fujii C.Y."/>
            <person name="Mason T.M."/>
            <person name="Bowman C.L."/>
            <person name="Barnstead M.E."/>
            <person name="Feldblyum T.V."/>
            <person name="Buell C.R."/>
            <person name="Ketchum K.A."/>
            <person name="Lee J.J."/>
            <person name="Ronning C.M."/>
            <person name="Koo H.L."/>
            <person name="Moffat K.S."/>
            <person name="Cronin L.A."/>
            <person name="Shen M."/>
            <person name="Pai G."/>
            <person name="Van Aken S."/>
            <person name="Umayam L."/>
            <person name="Tallon L.J."/>
            <person name="Gill J.E."/>
            <person name="Adams M.D."/>
            <person name="Carrera A.J."/>
            <person name="Creasy T.H."/>
            <person name="Goodman H.M."/>
            <person name="Somerville C.R."/>
            <person name="Copenhaver G.P."/>
            <person name="Preuss D."/>
            <person name="Nierman W.C."/>
            <person name="White O."/>
            <person name="Eisen J.A."/>
            <person name="Salzberg S.L."/>
            <person name="Fraser C.M."/>
            <person name="Venter J.C."/>
        </authorList>
    </citation>
    <scope>NUCLEOTIDE SEQUENCE [LARGE SCALE GENOMIC DNA]</scope>
    <source>
        <strain>cv. Columbia</strain>
    </source>
</reference>
<reference key="3">
    <citation type="journal article" date="2017" name="Plant J.">
        <title>Araport11: a complete reannotation of the Arabidopsis thaliana reference genome.</title>
        <authorList>
            <person name="Cheng C.Y."/>
            <person name="Krishnakumar V."/>
            <person name="Chan A.P."/>
            <person name="Thibaud-Nissen F."/>
            <person name="Schobel S."/>
            <person name="Town C.D."/>
        </authorList>
    </citation>
    <scope>GENOME REANNOTATION</scope>
    <source>
        <strain>cv. Columbia</strain>
    </source>
</reference>
<reference key="4">
    <citation type="journal article" date="2003" name="Science">
        <title>Empirical analysis of transcriptional activity in the Arabidopsis genome.</title>
        <authorList>
            <person name="Yamada K."/>
            <person name="Lim J."/>
            <person name="Dale J.M."/>
            <person name="Chen H."/>
            <person name="Shinn P."/>
            <person name="Palm C.J."/>
            <person name="Southwick A.M."/>
            <person name="Wu H.C."/>
            <person name="Kim C.J."/>
            <person name="Nguyen M."/>
            <person name="Pham P.K."/>
            <person name="Cheuk R.F."/>
            <person name="Karlin-Newmann G."/>
            <person name="Liu S.X."/>
            <person name="Lam B."/>
            <person name="Sakano H."/>
            <person name="Wu T."/>
            <person name="Yu G."/>
            <person name="Miranda M."/>
            <person name="Quach H.L."/>
            <person name="Tripp M."/>
            <person name="Chang C.H."/>
            <person name="Lee J.M."/>
            <person name="Toriumi M.J."/>
            <person name="Chan M.M."/>
            <person name="Tang C.C."/>
            <person name="Onodera C.S."/>
            <person name="Deng J.M."/>
            <person name="Akiyama K."/>
            <person name="Ansari Y."/>
            <person name="Arakawa T."/>
            <person name="Banh J."/>
            <person name="Banno F."/>
            <person name="Bowser L."/>
            <person name="Brooks S.Y."/>
            <person name="Carninci P."/>
            <person name="Chao Q."/>
            <person name="Choy N."/>
            <person name="Enju A."/>
            <person name="Goldsmith A.D."/>
            <person name="Gurjal M."/>
            <person name="Hansen N.F."/>
            <person name="Hayashizaki Y."/>
            <person name="Johnson-Hopson C."/>
            <person name="Hsuan V.W."/>
            <person name="Iida K."/>
            <person name="Karnes M."/>
            <person name="Khan S."/>
            <person name="Koesema E."/>
            <person name="Ishida J."/>
            <person name="Jiang P.X."/>
            <person name="Jones T."/>
            <person name="Kawai J."/>
            <person name="Kamiya A."/>
            <person name="Meyers C."/>
            <person name="Nakajima M."/>
            <person name="Narusaka M."/>
            <person name="Seki M."/>
            <person name="Sakurai T."/>
            <person name="Satou M."/>
            <person name="Tamse R."/>
            <person name="Vaysberg M."/>
            <person name="Wallender E.K."/>
            <person name="Wong C."/>
            <person name="Yamamura Y."/>
            <person name="Yuan S."/>
            <person name="Shinozaki K."/>
            <person name="Davis R.W."/>
            <person name="Theologis A."/>
            <person name="Ecker J.R."/>
        </authorList>
    </citation>
    <scope>NUCLEOTIDE SEQUENCE [LARGE SCALE MRNA]</scope>
    <source>
        <strain>cv. Columbia</strain>
    </source>
</reference>
<reference key="5">
    <citation type="journal article" date="2002" name="Plant Physiol.">
        <title>Cloning and sequencing of cDNAs for hypothetical genes from chromosome 2 of Arabidopsis.</title>
        <authorList>
            <person name="Xiao Y.-L."/>
            <person name="Malik M."/>
            <person name="Whitelaw C.A."/>
            <person name="Town C.D."/>
        </authorList>
    </citation>
    <scope>NUCLEOTIDE SEQUENCE [LARGE SCALE MRNA]</scope>
    <source>
        <strain>cv. Columbia</strain>
    </source>
</reference>
<reference key="6">
    <citation type="journal article" date="2009" name="Plant Cell">
        <title>A root-expressed magnesium transporter of the MRS2/MGT gene family in Arabidopsis thaliana allows for growth in low-Mg2+ environments.</title>
        <authorList>
            <person name="Gebert M."/>
            <person name="Meschenmoser K."/>
            <person name="Svidova S."/>
            <person name="Weghuber J."/>
            <person name="Schweyen R."/>
            <person name="Eifler K."/>
            <person name="Lenz H."/>
            <person name="Weyand K."/>
            <person name="Knoop V."/>
        </authorList>
    </citation>
    <scope>GENE FAMILY</scope>
    <scope>NOMENCLATURE</scope>
    <scope>TISSUE SPECIFICITY</scope>
</reference>
<proteinExistence type="evidence at transcript level"/>
<accession>Q9ZPR4</accession>
<accession>Q8H1H0</accession>
<dbReference type="EMBL" id="AY150290">
    <property type="protein sequence ID" value="AAN73215.1"/>
    <property type="molecule type" value="mRNA"/>
</dbReference>
<dbReference type="EMBL" id="AC006836">
    <property type="protein sequence ID" value="AAD20070.1"/>
    <property type="molecule type" value="Genomic_DNA"/>
</dbReference>
<dbReference type="EMBL" id="CP002685">
    <property type="protein sequence ID" value="AEC05725.1"/>
    <property type="molecule type" value="Genomic_DNA"/>
</dbReference>
<dbReference type="EMBL" id="CP002685">
    <property type="protein sequence ID" value="AEC05726.1"/>
    <property type="molecule type" value="Genomic_DNA"/>
</dbReference>
<dbReference type="EMBL" id="AY070380">
    <property type="protein sequence ID" value="AAL49876.1"/>
    <property type="molecule type" value="mRNA"/>
</dbReference>
<dbReference type="EMBL" id="AY096567">
    <property type="protein sequence ID" value="AAM20217.1"/>
    <property type="molecule type" value="mRNA"/>
</dbReference>
<dbReference type="EMBL" id="AF499434">
    <property type="protein sequence ID" value="AAM19344.1"/>
    <property type="molecule type" value="mRNA"/>
</dbReference>
<dbReference type="PIR" id="F84450">
    <property type="entry name" value="F84450"/>
</dbReference>
<dbReference type="RefSeq" id="NP_001118259.1">
    <property type="nucleotide sequence ID" value="NM_001124787.1"/>
</dbReference>
<dbReference type="RefSeq" id="NP_178460.1">
    <property type="nucleotide sequence ID" value="NM_126412.6"/>
</dbReference>
<dbReference type="SMR" id="Q9ZPR4"/>
<dbReference type="BioGRID" id="292">
    <property type="interactions" value="38"/>
</dbReference>
<dbReference type="FunCoup" id="Q9ZPR4">
    <property type="interactions" value="1103"/>
</dbReference>
<dbReference type="IntAct" id="Q9ZPR4">
    <property type="interactions" value="37"/>
</dbReference>
<dbReference type="STRING" id="3702.Q9ZPR4"/>
<dbReference type="TCDB" id="1.A.35.5.6">
    <property type="family name" value="the cora metal ion transporter (mit) family"/>
</dbReference>
<dbReference type="iPTMnet" id="Q9ZPR4"/>
<dbReference type="PaxDb" id="3702-AT2G03620.2"/>
<dbReference type="ProteomicsDB" id="250868"/>
<dbReference type="EnsemblPlants" id="AT2G03620.1">
    <property type="protein sequence ID" value="AT2G03620.1"/>
    <property type="gene ID" value="AT2G03620"/>
</dbReference>
<dbReference type="EnsemblPlants" id="AT2G03620.2">
    <property type="protein sequence ID" value="AT2G03620.2"/>
    <property type="gene ID" value="AT2G03620"/>
</dbReference>
<dbReference type="GeneID" id="814891"/>
<dbReference type="Gramene" id="AT2G03620.1">
    <property type="protein sequence ID" value="AT2G03620.1"/>
    <property type="gene ID" value="AT2G03620"/>
</dbReference>
<dbReference type="Gramene" id="AT2G03620.2">
    <property type="protein sequence ID" value="AT2G03620.2"/>
    <property type="gene ID" value="AT2G03620"/>
</dbReference>
<dbReference type="KEGG" id="ath:AT2G03620"/>
<dbReference type="Araport" id="AT2G03620"/>
<dbReference type="TAIR" id="AT2G03620">
    <property type="gene designation" value="MGT3"/>
</dbReference>
<dbReference type="eggNOG" id="KOG2662">
    <property type="taxonomic scope" value="Eukaryota"/>
</dbReference>
<dbReference type="HOGENOM" id="CLU_034694_1_0_1"/>
<dbReference type="InParanoid" id="Q9ZPR4"/>
<dbReference type="OMA" id="FDYPSGF"/>
<dbReference type="OrthoDB" id="10251508at2759"/>
<dbReference type="PhylomeDB" id="Q9ZPR4"/>
<dbReference type="PRO" id="PR:Q9ZPR4"/>
<dbReference type="Proteomes" id="UP000006548">
    <property type="component" value="Chromosome 2"/>
</dbReference>
<dbReference type="ExpressionAtlas" id="Q9ZPR4">
    <property type="expression patterns" value="baseline and differential"/>
</dbReference>
<dbReference type="GO" id="GO:0016020">
    <property type="term" value="C:membrane"/>
    <property type="evidence" value="ECO:0007669"/>
    <property type="project" value="UniProtKB-SubCell"/>
</dbReference>
<dbReference type="GO" id="GO:0015095">
    <property type="term" value="F:magnesium ion transmembrane transporter activity"/>
    <property type="evidence" value="ECO:0000314"/>
    <property type="project" value="TAIR"/>
</dbReference>
<dbReference type="CDD" id="cd12823">
    <property type="entry name" value="Mrs2_Mfm1p-like"/>
    <property type="match status" value="1"/>
</dbReference>
<dbReference type="FunFam" id="2.40.128.330:FF:000001">
    <property type="entry name" value="Magnesium transporter MRS2-1"/>
    <property type="match status" value="1"/>
</dbReference>
<dbReference type="Gene3D" id="2.40.128.330">
    <property type="match status" value="1"/>
</dbReference>
<dbReference type="Gene3D" id="1.20.58.340">
    <property type="entry name" value="Magnesium transport protein CorA, transmembrane region"/>
    <property type="match status" value="1"/>
</dbReference>
<dbReference type="InterPro" id="IPR039204">
    <property type="entry name" value="MRS2-like"/>
</dbReference>
<dbReference type="PANTHER" id="PTHR13890:SF39">
    <property type="entry name" value="MAGNESIUM TRANSPORTER MRS2-5"/>
    <property type="match status" value="1"/>
</dbReference>
<dbReference type="PANTHER" id="PTHR13890">
    <property type="entry name" value="RNA SPLICING PROTEIN MRS2, MITOCHONDRIAL"/>
    <property type="match status" value="1"/>
</dbReference>
<dbReference type="Pfam" id="PF22099">
    <property type="entry name" value="MRS2-like"/>
    <property type="match status" value="1"/>
</dbReference>
<protein>
    <recommendedName>
        <fullName>Magnesium transporter MRS2-5</fullName>
    </recommendedName>
    <alternativeName>
        <fullName>Magnesium Transporter 3</fullName>
        <shortName>AtMGT3</shortName>
    </alternativeName>
</protein>
<organism>
    <name type="scientific">Arabidopsis thaliana</name>
    <name type="common">Mouse-ear cress</name>
    <dbReference type="NCBI Taxonomy" id="3702"/>
    <lineage>
        <taxon>Eukaryota</taxon>
        <taxon>Viridiplantae</taxon>
        <taxon>Streptophyta</taxon>
        <taxon>Embryophyta</taxon>
        <taxon>Tracheophyta</taxon>
        <taxon>Spermatophyta</taxon>
        <taxon>Magnoliopsida</taxon>
        <taxon>eudicotyledons</taxon>
        <taxon>Gunneridae</taxon>
        <taxon>Pentapetalae</taxon>
        <taxon>rosids</taxon>
        <taxon>malvids</taxon>
        <taxon>Brassicales</taxon>
        <taxon>Brassicaceae</taxon>
        <taxon>Camelineae</taxon>
        <taxon>Arabidopsis</taxon>
    </lineage>
</organism>
<name>MRS25_ARATH</name>
<comment type="function">
    <text evidence="1">Magnesium transporter that may mediate the influx of magnesium.</text>
</comment>
<comment type="subcellular location">
    <subcellularLocation>
        <location evidence="2">Membrane</location>
        <topology evidence="2">Multi-pass membrane protein</topology>
    </subcellularLocation>
</comment>
<comment type="tissue specificity">
    <text evidence="3 4">Expressed in the whole plant.</text>
</comment>
<comment type="miscellaneous">
    <text>Has the ability to complement a mutant in yeast lacking magnesium transport capability.</text>
</comment>
<comment type="similarity">
    <text evidence="5">Belongs to the CorA metal ion transporter (MIT) (TC 1.A.35.5) family.</text>
</comment>
<feature type="chain" id="PRO_0000394169" description="Magnesium transporter MRS2-5">
    <location>
        <begin position="1"/>
        <end position="421"/>
    </location>
</feature>
<feature type="transmembrane region" description="Helical" evidence="2">
    <location>
        <begin position="357"/>
        <end position="377"/>
    </location>
</feature>
<feature type="transmembrane region" description="Helical" evidence="2">
    <location>
        <begin position="393"/>
        <end position="413"/>
    </location>
</feature>
<feature type="short sequence motif" description="Required for magnesium transport activity">
    <location>
        <begin position="377"/>
        <end position="379"/>
    </location>
</feature>
<feature type="sequence conflict" description="In Ref. 1; AAN73215." evidence="5" ref="1">
    <original>E</original>
    <variation>D</variation>
    <location>
        <position position="185"/>
    </location>
</feature>
<keyword id="KW-0406">Ion transport</keyword>
<keyword id="KW-0460">Magnesium</keyword>
<keyword id="KW-0472">Membrane</keyword>
<keyword id="KW-1185">Reference proteome</keyword>
<keyword id="KW-0812">Transmembrane</keyword>
<keyword id="KW-1133">Transmembrane helix</keyword>
<keyword id="KW-0813">Transport</keyword>